<protein>
    <recommendedName>
        <fullName evidence="3">Large ribosomal subunit protein bL32c</fullName>
    </recommendedName>
    <alternativeName>
        <fullName>50S ribosomal protein L32, chloroplastic</fullName>
    </alternativeName>
</protein>
<organism>
    <name type="scientific">Oryza sativa subsp. japonica</name>
    <name type="common">Rice</name>
    <dbReference type="NCBI Taxonomy" id="39947"/>
    <lineage>
        <taxon>Eukaryota</taxon>
        <taxon>Viridiplantae</taxon>
        <taxon>Streptophyta</taxon>
        <taxon>Embryophyta</taxon>
        <taxon>Tracheophyta</taxon>
        <taxon>Spermatophyta</taxon>
        <taxon>Magnoliopsida</taxon>
        <taxon>Liliopsida</taxon>
        <taxon>Poales</taxon>
        <taxon>Poaceae</taxon>
        <taxon>BOP clade</taxon>
        <taxon>Oryzoideae</taxon>
        <taxon>Oryzeae</taxon>
        <taxon>Oryzinae</taxon>
        <taxon>Oryza</taxon>
        <taxon>Oryza sativa</taxon>
    </lineage>
</organism>
<sequence>MAVPKKRTSMSKKRIRKNLWKKKTYFSIVQSYSLAKSRSFSGVSEHPKPKGFSRQQTNNRVLG</sequence>
<feature type="initiator methionine" description="Removed" evidence="1">
    <location>
        <position position="1"/>
    </location>
</feature>
<feature type="chain" id="PRO_0000290052" description="Large ribosomal subunit protein bL32c">
    <location>
        <begin position="2"/>
        <end position="63"/>
    </location>
</feature>
<feature type="region of interest" description="Disordered" evidence="2">
    <location>
        <begin position="38"/>
        <end position="63"/>
    </location>
</feature>
<feature type="compositionally biased region" description="Polar residues" evidence="2">
    <location>
        <begin position="53"/>
        <end position="63"/>
    </location>
</feature>
<evidence type="ECO:0000250" key="1"/>
<evidence type="ECO:0000256" key="2">
    <source>
        <dbReference type="SAM" id="MobiDB-lite"/>
    </source>
</evidence>
<evidence type="ECO:0000305" key="3"/>
<reference key="1">
    <citation type="journal article" date="1989" name="Mol. Gen. Genet.">
        <title>The complete sequence of the rice (Oryza sativa) chloroplast genome: intermolecular recombination between distinct tRNA genes accounts for a major plastid DNA inversion during the evolution of the cereals.</title>
        <authorList>
            <person name="Hiratsuka J."/>
            <person name="Shimada H."/>
            <person name="Whittier R."/>
            <person name="Ishibashi T."/>
            <person name="Sakamoto M."/>
            <person name="Mori M."/>
            <person name="Kondo C."/>
            <person name="Honji Y."/>
            <person name="Sun C.-R."/>
            <person name="Meng B.-Y."/>
            <person name="Li Y.-Q."/>
            <person name="Kanno A."/>
            <person name="Nishizawa Y."/>
            <person name="Hirai A."/>
            <person name="Shinozaki K."/>
            <person name="Sugiura M."/>
        </authorList>
    </citation>
    <scope>NUCLEOTIDE SEQUENCE [LARGE SCALE GENOMIC DNA]</scope>
    <source>
        <strain>cv. Nipponbare</strain>
    </source>
</reference>
<reference key="2">
    <citation type="journal article" date="2004" name="Plant Physiol.">
        <title>A comparison of rice chloroplast genomes.</title>
        <authorList>
            <person name="Tang J."/>
            <person name="Xia H."/>
            <person name="Cao M."/>
            <person name="Zhang X."/>
            <person name="Zeng W."/>
            <person name="Hu S."/>
            <person name="Tong W."/>
            <person name="Wang J."/>
            <person name="Wang J."/>
            <person name="Yu J."/>
            <person name="Yang H."/>
            <person name="Zhu L."/>
        </authorList>
    </citation>
    <scope>NUCLEOTIDE SEQUENCE [LARGE SCALE GENOMIC DNA]</scope>
    <source>
        <strain>cv. Nipponbare</strain>
    </source>
</reference>
<gene>
    <name type="primary">rpl32</name>
    <name type="ordered locus">LOC_Osp1g00890</name>
    <name type="ORF">Nip166</name>
</gene>
<dbReference type="EMBL" id="X15901">
    <property type="protein sequence ID" value="CAA33951.1"/>
    <property type="molecule type" value="Genomic_DNA"/>
</dbReference>
<dbReference type="EMBL" id="AY522330">
    <property type="protein sequence ID" value="AAS46155.1"/>
    <property type="molecule type" value="Genomic_DNA"/>
</dbReference>
<dbReference type="PIR" id="JQ0287">
    <property type="entry name" value="R5RZ32"/>
</dbReference>
<dbReference type="RefSeq" id="NP_039442.1">
    <property type="nucleotide sequence ID" value="NC_001320.1"/>
</dbReference>
<dbReference type="SMR" id="P0C454"/>
<dbReference type="FunCoup" id="P0C454">
    <property type="interactions" value="387"/>
</dbReference>
<dbReference type="STRING" id="39947.P0C454"/>
<dbReference type="PaxDb" id="39947-P0C454"/>
<dbReference type="GeneID" id="3131486"/>
<dbReference type="KEGG" id="dosa:CAA33951.1"/>
<dbReference type="KEGG" id="osa:3131486"/>
<dbReference type="InParanoid" id="P0C454"/>
<dbReference type="OrthoDB" id="671523at2759"/>
<dbReference type="Proteomes" id="UP000059680">
    <property type="component" value="Chloroplast"/>
</dbReference>
<dbReference type="GO" id="GO:0009507">
    <property type="term" value="C:chloroplast"/>
    <property type="evidence" value="ECO:0007669"/>
    <property type="project" value="UniProtKB-SubCell"/>
</dbReference>
<dbReference type="GO" id="GO:0015934">
    <property type="term" value="C:large ribosomal subunit"/>
    <property type="evidence" value="ECO:0007669"/>
    <property type="project" value="InterPro"/>
</dbReference>
<dbReference type="GO" id="GO:0009536">
    <property type="term" value="C:plastid"/>
    <property type="evidence" value="ECO:0000305"/>
    <property type="project" value="Gramene"/>
</dbReference>
<dbReference type="GO" id="GO:0003735">
    <property type="term" value="F:structural constituent of ribosome"/>
    <property type="evidence" value="ECO:0007669"/>
    <property type="project" value="InterPro"/>
</dbReference>
<dbReference type="GO" id="GO:0006412">
    <property type="term" value="P:translation"/>
    <property type="evidence" value="ECO:0007669"/>
    <property type="project" value="UniProtKB-UniRule"/>
</dbReference>
<dbReference type="HAMAP" id="MF_00340">
    <property type="entry name" value="Ribosomal_bL32"/>
    <property type="match status" value="1"/>
</dbReference>
<dbReference type="InterPro" id="IPR002677">
    <property type="entry name" value="Ribosomal_bL32"/>
</dbReference>
<dbReference type="InterPro" id="IPR044958">
    <property type="entry name" value="Ribosomal_bL32_plant/cyanobact"/>
</dbReference>
<dbReference type="InterPro" id="IPR011332">
    <property type="entry name" value="Ribosomal_zn-bd"/>
</dbReference>
<dbReference type="PANTHER" id="PTHR36083">
    <property type="entry name" value="50S RIBOSOMAL PROTEIN L32, CHLOROPLASTIC"/>
    <property type="match status" value="1"/>
</dbReference>
<dbReference type="PANTHER" id="PTHR36083:SF1">
    <property type="entry name" value="LARGE RIBOSOMAL SUBUNIT PROTEIN BL32C"/>
    <property type="match status" value="1"/>
</dbReference>
<dbReference type="Pfam" id="PF01783">
    <property type="entry name" value="Ribosomal_L32p"/>
    <property type="match status" value="1"/>
</dbReference>
<dbReference type="SUPFAM" id="SSF57829">
    <property type="entry name" value="Zn-binding ribosomal proteins"/>
    <property type="match status" value="1"/>
</dbReference>
<name>RK32_ORYSJ</name>
<geneLocation type="chloroplast"/>
<comment type="subcellular location">
    <subcellularLocation>
        <location>Plastid</location>
        <location>Chloroplast</location>
    </subcellularLocation>
</comment>
<comment type="similarity">
    <text evidence="3">Belongs to the bacterial ribosomal protein bL32 family.</text>
</comment>
<proteinExistence type="inferred from homology"/>
<keyword id="KW-0150">Chloroplast</keyword>
<keyword id="KW-0934">Plastid</keyword>
<keyword id="KW-1185">Reference proteome</keyword>
<keyword id="KW-0687">Ribonucleoprotein</keyword>
<keyword id="KW-0689">Ribosomal protein</keyword>
<accession>P0C454</accession>
<accession>P12197</accession>
<accession>Q6QXR3</accession>
<accession>Q6QY39</accession>